<organism>
    <name type="scientific">Escherichia coli (strain 55989 / EAEC)</name>
    <dbReference type="NCBI Taxonomy" id="585055"/>
    <lineage>
        <taxon>Bacteria</taxon>
        <taxon>Pseudomonadati</taxon>
        <taxon>Pseudomonadota</taxon>
        <taxon>Gammaproteobacteria</taxon>
        <taxon>Enterobacterales</taxon>
        <taxon>Enterobacteriaceae</taxon>
        <taxon>Escherichia</taxon>
    </lineage>
</organism>
<proteinExistence type="inferred from homology"/>
<protein>
    <recommendedName>
        <fullName evidence="1">Iron-sulfur cluster assembly protein CyaY</fullName>
    </recommendedName>
</protein>
<keyword id="KW-0408">Iron</keyword>
<keyword id="KW-0479">Metal-binding</keyword>
<keyword id="KW-1185">Reference proteome</keyword>
<feature type="chain" id="PRO_1000123044" description="Iron-sulfur cluster assembly protein CyaY">
    <location>
        <begin position="1"/>
        <end position="106"/>
    </location>
</feature>
<comment type="function">
    <text evidence="1">Involved in iron-sulfur (Fe-S) cluster assembly. May act as a regulator of Fe-S biogenesis.</text>
</comment>
<comment type="similarity">
    <text evidence="1">Belongs to the frataxin family.</text>
</comment>
<accession>B7L963</accession>
<dbReference type="EMBL" id="CU928145">
    <property type="protein sequence ID" value="CAV00925.1"/>
    <property type="molecule type" value="Genomic_DNA"/>
</dbReference>
<dbReference type="RefSeq" id="WP_000999947.1">
    <property type="nucleotide sequence ID" value="NZ_CP028304.1"/>
</dbReference>
<dbReference type="BMRB" id="B7L963"/>
<dbReference type="SMR" id="B7L963"/>
<dbReference type="GeneID" id="93778137"/>
<dbReference type="KEGG" id="eck:EC55989_4277"/>
<dbReference type="HOGENOM" id="CLU_080880_3_0_6"/>
<dbReference type="Proteomes" id="UP000000746">
    <property type="component" value="Chromosome"/>
</dbReference>
<dbReference type="GO" id="GO:0005829">
    <property type="term" value="C:cytosol"/>
    <property type="evidence" value="ECO:0007669"/>
    <property type="project" value="TreeGrafter"/>
</dbReference>
<dbReference type="GO" id="GO:0008199">
    <property type="term" value="F:ferric iron binding"/>
    <property type="evidence" value="ECO:0007669"/>
    <property type="project" value="InterPro"/>
</dbReference>
<dbReference type="GO" id="GO:0008198">
    <property type="term" value="F:ferrous iron binding"/>
    <property type="evidence" value="ECO:0007669"/>
    <property type="project" value="TreeGrafter"/>
</dbReference>
<dbReference type="GO" id="GO:0016226">
    <property type="term" value="P:iron-sulfur cluster assembly"/>
    <property type="evidence" value="ECO:0007669"/>
    <property type="project" value="UniProtKB-UniRule"/>
</dbReference>
<dbReference type="CDD" id="cd00503">
    <property type="entry name" value="Frataxin"/>
    <property type="match status" value="1"/>
</dbReference>
<dbReference type="FunFam" id="3.30.920.10:FF:000001">
    <property type="entry name" value="Iron-sulfur cluster assembly protein CyaY"/>
    <property type="match status" value="1"/>
</dbReference>
<dbReference type="Gene3D" id="3.30.920.10">
    <property type="entry name" value="Frataxin/CyaY"/>
    <property type="match status" value="1"/>
</dbReference>
<dbReference type="HAMAP" id="MF_00142">
    <property type="entry name" value="CyaY"/>
    <property type="match status" value="1"/>
</dbReference>
<dbReference type="InterPro" id="IPR047584">
    <property type="entry name" value="CyaY"/>
</dbReference>
<dbReference type="InterPro" id="IPR002908">
    <property type="entry name" value="Frataxin/CyaY"/>
</dbReference>
<dbReference type="InterPro" id="IPR036524">
    <property type="entry name" value="Frataxin/CyaY_sf"/>
</dbReference>
<dbReference type="InterPro" id="IPR020895">
    <property type="entry name" value="Frataxin_CS"/>
</dbReference>
<dbReference type="NCBIfam" id="TIGR03421">
    <property type="entry name" value="FeS_CyaY"/>
    <property type="match status" value="1"/>
</dbReference>
<dbReference type="PANTHER" id="PTHR16821">
    <property type="entry name" value="FRATAXIN"/>
    <property type="match status" value="1"/>
</dbReference>
<dbReference type="PANTHER" id="PTHR16821:SF2">
    <property type="entry name" value="FRATAXIN, MITOCHONDRIAL"/>
    <property type="match status" value="1"/>
</dbReference>
<dbReference type="Pfam" id="PF01491">
    <property type="entry name" value="Frataxin_Cyay"/>
    <property type="match status" value="1"/>
</dbReference>
<dbReference type="SMART" id="SM01219">
    <property type="entry name" value="Frataxin_Cyay"/>
    <property type="match status" value="1"/>
</dbReference>
<dbReference type="SUPFAM" id="SSF55387">
    <property type="entry name" value="Frataxin/Nqo15-like"/>
    <property type="match status" value="1"/>
</dbReference>
<dbReference type="PROSITE" id="PS01344">
    <property type="entry name" value="FRATAXIN_1"/>
    <property type="match status" value="1"/>
</dbReference>
<dbReference type="PROSITE" id="PS50810">
    <property type="entry name" value="FRATAXIN_2"/>
    <property type="match status" value="1"/>
</dbReference>
<gene>
    <name evidence="1" type="primary">cyaY</name>
    <name type="ordered locus">EC55989_4277</name>
</gene>
<name>CYAY_ECO55</name>
<reference key="1">
    <citation type="journal article" date="2009" name="PLoS Genet.">
        <title>Organised genome dynamics in the Escherichia coli species results in highly diverse adaptive paths.</title>
        <authorList>
            <person name="Touchon M."/>
            <person name="Hoede C."/>
            <person name="Tenaillon O."/>
            <person name="Barbe V."/>
            <person name="Baeriswyl S."/>
            <person name="Bidet P."/>
            <person name="Bingen E."/>
            <person name="Bonacorsi S."/>
            <person name="Bouchier C."/>
            <person name="Bouvet O."/>
            <person name="Calteau A."/>
            <person name="Chiapello H."/>
            <person name="Clermont O."/>
            <person name="Cruveiller S."/>
            <person name="Danchin A."/>
            <person name="Diard M."/>
            <person name="Dossat C."/>
            <person name="Karoui M.E."/>
            <person name="Frapy E."/>
            <person name="Garry L."/>
            <person name="Ghigo J.M."/>
            <person name="Gilles A.M."/>
            <person name="Johnson J."/>
            <person name="Le Bouguenec C."/>
            <person name="Lescat M."/>
            <person name="Mangenot S."/>
            <person name="Martinez-Jehanne V."/>
            <person name="Matic I."/>
            <person name="Nassif X."/>
            <person name="Oztas S."/>
            <person name="Petit M.A."/>
            <person name="Pichon C."/>
            <person name="Rouy Z."/>
            <person name="Ruf C.S."/>
            <person name="Schneider D."/>
            <person name="Tourret J."/>
            <person name="Vacherie B."/>
            <person name="Vallenet D."/>
            <person name="Medigue C."/>
            <person name="Rocha E.P.C."/>
            <person name="Denamur E."/>
        </authorList>
    </citation>
    <scope>NUCLEOTIDE SEQUENCE [LARGE SCALE GENOMIC DNA]</scope>
    <source>
        <strain>55989 / EAEC</strain>
    </source>
</reference>
<sequence length="106" mass="12231">MNDSEFHRLADQLWLTIEERLDDWDGDSDIDCEINGGVLTITFENGSKIIINRQEPLHQVWLATKQGGYHFDLKGDEWICDRSGETFWDLLEQAATQQAGETVSFR</sequence>
<evidence type="ECO:0000255" key="1">
    <source>
        <dbReference type="HAMAP-Rule" id="MF_00142"/>
    </source>
</evidence>